<comment type="function">
    <text evidence="5 6 7 8">V region of the variable domain of immunoglobulin heavy chains that participates in the antigen recognition (PubMed:24600447). Immunoglobulins, also known as antibodies, are membrane-bound or secreted glycoproteins produced by B lymphocytes. In the recognition phase of humoral immunity, the membrane-bound immunoglobulins serve as receptors which, upon binding of a specific antigen, trigger the clonal expansion and differentiation of B lymphocytes into immunoglobulins-secreting plasma cells. Secreted immunoglobulins mediate the effector phase of humoral immunity, which results in the elimination of bound antigens (PubMed:20176268, PubMed:22158414). The antigen binding site is formed by the variable domain of one heavy chain, together with that of its associated light chain. Thus, each immunoglobulin has two antigen binding sites with remarkable affinity for a particular antigen. The variable domains are assembled by a process called V-(D)-J rearrangement and can then be subjected to somatic hypermutations which, after exposure to antigen and selection, allow affinity maturation for a particular antigen (PubMed:17576170, PubMed:20176268).</text>
</comment>
<comment type="subunit">
    <text evidence="6">Immunoglobulins are composed of two identical heavy chains and two identical light chains; disulfide-linked.</text>
</comment>
<comment type="subcellular location">
    <subcellularLocation>
        <location evidence="6 7">Secreted</location>
    </subcellularLocation>
    <subcellularLocation>
        <location evidence="6 7">Cell membrane</location>
    </subcellularLocation>
</comment>
<comment type="polymorphism">
    <text evidence="10">There are several alleles. The sequence shown is that of IMGT allele IGHV4-30-4*01.</text>
</comment>
<comment type="caution">
    <text evidence="10">For examples of full-length immunoglobulin heavy chains (of different isotypes) see AC P0DOX2, AC P0DOX3, AC P0DOX4, AC P0DOX5 and AC P0DOX6.</text>
</comment>
<comment type="caution">
    <text evidence="11">Weng et al. identified this gene on chromosome 14. However, it is not currently present on the reference genome assembly (GRCh38/hg38).</text>
</comment>
<comment type="sequence caution" evidence="10">
    <conflict type="erroneous initiation">
        <sequence resource="EMBL-CDS" id="CAA78607"/>
    </conflict>
    <text>Truncated N-terminus.</text>
</comment>
<name>HVD34_HUMAN</name>
<dbReference type="EMBL" id="Z14238">
    <property type="protein sequence ID" value="CAA78607.1"/>
    <property type="status" value="ALT_INIT"/>
    <property type="molecule type" value="Genomic_DNA"/>
</dbReference>
<dbReference type="SMR" id="P0DP06"/>
<dbReference type="FunCoup" id="P0DP06">
    <property type="interactions" value="353"/>
</dbReference>
<dbReference type="IMGT_GENE-DB" id="IGHV4-30-4"/>
<dbReference type="BioMuta" id="HGNC:5648"/>
<dbReference type="jPOST" id="P0DP06"/>
<dbReference type="MassIVE" id="P0DP06"/>
<dbReference type="AGR" id="HGNC:5648"/>
<dbReference type="GeneCards" id="IGHV4-30-4"/>
<dbReference type="HGNC" id="HGNC:5648">
    <property type="gene designation" value="IGHV4-30-4"/>
</dbReference>
<dbReference type="neXtProt" id="NX_P0DP06"/>
<dbReference type="InParanoid" id="P0DP06"/>
<dbReference type="PAN-GO" id="P0DP06">
    <property type="GO annotations" value="11 GO annotations based on evolutionary models"/>
</dbReference>
<dbReference type="Pharos" id="P0DP06">
    <property type="development level" value="Tdark"/>
</dbReference>
<dbReference type="PRO" id="PR:P0DP06"/>
<dbReference type="Proteomes" id="UP000005640">
    <property type="component" value="Unplaced"/>
</dbReference>
<dbReference type="RNAct" id="P0DP06">
    <property type="molecule type" value="protein"/>
</dbReference>
<dbReference type="GO" id="GO:0005576">
    <property type="term" value="C:extracellular region"/>
    <property type="evidence" value="ECO:0007669"/>
    <property type="project" value="UniProtKB-SubCell"/>
</dbReference>
<dbReference type="GO" id="GO:0019814">
    <property type="term" value="C:immunoglobulin complex"/>
    <property type="evidence" value="ECO:0007669"/>
    <property type="project" value="UniProtKB-KW"/>
</dbReference>
<dbReference type="GO" id="GO:0005886">
    <property type="term" value="C:plasma membrane"/>
    <property type="evidence" value="ECO:0007669"/>
    <property type="project" value="UniProtKB-SubCell"/>
</dbReference>
<dbReference type="GO" id="GO:0003823">
    <property type="term" value="F:antigen binding"/>
    <property type="evidence" value="ECO:0000318"/>
    <property type="project" value="GO_Central"/>
</dbReference>
<dbReference type="GO" id="GO:0016064">
    <property type="term" value="P:immunoglobulin mediated immune response"/>
    <property type="evidence" value="ECO:0000318"/>
    <property type="project" value="GO_Central"/>
</dbReference>
<dbReference type="FunFam" id="2.60.40.10:FF:001119">
    <property type="entry name" value="Immunoglobulin heavy variable 4-30-4"/>
    <property type="match status" value="1"/>
</dbReference>
<dbReference type="Gene3D" id="2.60.40.10">
    <property type="entry name" value="Immunoglobulins"/>
    <property type="match status" value="1"/>
</dbReference>
<dbReference type="InterPro" id="IPR007110">
    <property type="entry name" value="Ig-like_dom"/>
</dbReference>
<dbReference type="InterPro" id="IPR036179">
    <property type="entry name" value="Ig-like_dom_sf"/>
</dbReference>
<dbReference type="InterPro" id="IPR013783">
    <property type="entry name" value="Ig-like_fold"/>
</dbReference>
<dbReference type="InterPro" id="IPR013106">
    <property type="entry name" value="Ig_V-set"/>
</dbReference>
<dbReference type="InterPro" id="IPR050199">
    <property type="entry name" value="IgHV"/>
</dbReference>
<dbReference type="PANTHER" id="PTHR23266">
    <property type="entry name" value="IMMUNOGLOBULIN HEAVY CHAIN"/>
    <property type="match status" value="1"/>
</dbReference>
<dbReference type="Pfam" id="PF07686">
    <property type="entry name" value="V-set"/>
    <property type="match status" value="1"/>
</dbReference>
<dbReference type="SMART" id="SM00406">
    <property type="entry name" value="IGv"/>
    <property type="match status" value="1"/>
</dbReference>
<dbReference type="SUPFAM" id="SSF48726">
    <property type="entry name" value="Immunoglobulin"/>
    <property type="match status" value="1"/>
</dbReference>
<dbReference type="PROSITE" id="PS50835">
    <property type="entry name" value="IG_LIKE"/>
    <property type="match status" value="1"/>
</dbReference>
<keyword id="KW-1064">Adaptive immunity</keyword>
<keyword id="KW-1003">Cell membrane</keyword>
<keyword id="KW-1015">Disulfide bond</keyword>
<keyword id="KW-0391">Immunity</keyword>
<keyword id="KW-1280">Immunoglobulin</keyword>
<keyword id="KW-0393">Immunoglobulin domain</keyword>
<keyword id="KW-0472">Membrane</keyword>
<keyword id="KW-1267">Proteomics identification</keyword>
<keyword id="KW-1185">Reference proteome</keyword>
<keyword id="KW-0964">Secreted</keyword>
<keyword id="KW-0732">Signal</keyword>
<organism>
    <name type="scientific">Homo sapiens</name>
    <name type="common">Human</name>
    <dbReference type="NCBI Taxonomy" id="9606"/>
    <lineage>
        <taxon>Eukaryota</taxon>
        <taxon>Metazoa</taxon>
        <taxon>Chordata</taxon>
        <taxon>Craniata</taxon>
        <taxon>Vertebrata</taxon>
        <taxon>Euteleostomi</taxon>
        <taxon>Mammalia</taxon>
        <taxon>Eutheria</taxon>
        <taxon>Euarchontoglires</taxon>
        <taxon>Primates</taxon>
        <taxon>Haplorrhini</taxon>
        <taxon>Catarrhini</taxon>
        <taxon>Hominidae</taxon>
        <taxon>Homo</taxon>
    </lineage>
</organism>
<protein>
    <recommendedName>
        <fullName evidence="4 9">Immunoglobulin heavy variable 4-30-4</fullName>
    </recommendedName>
</protein>
<proteinExistence type="evidence at protein level"/>
<accession>P0DP06</accession>
<feature type="signal peptide" evidence="2">
    <location>
        <begin position="1"/>
        <end position="19"/>
    </location>
</feature>
<feature type="chain" id="PRO_0000439563" description="Immunoglobulin heavy variable 4-30-4" evidence="2">
    <location>
        <begin position="20"/>
        <end position="118"/>
    </location>
</feature>
<feature type="domain" description="Ig-like" evidence="3">
    <location>
        <begin position="20"/>
        <end position="118" status="greater than"/>
    </location>
</feature>
<feature type="region of interest" description="Framework-1" evidence="1">
    <location>
        <begin position="20"/>
        <end position="44"/>
    </location>
</feature>
<feature type="region of interest" description="Complementarity-determining-1" evidence="1">
    <location>
        <begin position="45"/>
        <end position="54"/>
    </location>
</feature>
<feature type="region of interest" description="Framework-2" evidence="1">
    <location>
        <begin position="55"/>
        <end position="71"/>
    </location>
</feature>
<feature type="region of interest" description="Complementarity-determining-2" evidence="1">
    <location>
        <begin position="72"/>
        <end position="78"/>
    </location>
</feature>
<feature type="region of interest" description="Framework-3" evidence="1">
    <location>
        <begin position="79"/>
        <end position="116"/>
    </location>
</feature>
<feature type="region of interest" description="Complementarity-determining-3" evidence="1">
    <location>
        <begin position="117"/>
        <end position="118" status="greater than"/>
    </location>
</feature>
<feature type="disulfide bond" evidence="3">
    <location>
        <begin position="41"/>
        <end position="116"/>
    </location>
</feature>
<feature type="non-terminal residue">
    <location>
        <position position="118"/>
    </location>
</feature>
<gene>
    <name evidence="4 9" type="primary">IGHV4-30-4</name>
</gene>
<reference key="1">
    <citation type="journal article" date="1992" name="Eur. J. Immunol.">
        <title>Polymorphism of human immunoglobulin VH4 germ-line genes.</title>
        <authorList>
            <person name="Weng N.P."/>
            <person name="Snyder J.G."/>
            <person name="Yu-Lee L.Y."/>
            <person name="Marcus D.M."/>
        </authorList>
    </citation>
    <scope>NUCLEOTIDE SEQUENCE [GENOMIC DNA] (IMGT ALLELE IGHV4-30-4*01)</scope>
</reference>
<reference key="2">
    <citation type="journal article" date="2001" name="Exp. Clin. Immunogenet.">
        <title>Nomenclature of the human immunoglobulin heavy (IGH) genes.</title>
        <authorList>
            <person name="Lefranc M.P."/>
        </authorList>
    </citation>
    <scope>NOMENCLATURE</scope>
</reference>
<reference key="3">
    <citation type="book" date="2001" name="The Immunoglobulin FactsBook.">
        <title>The Immunoglobulin FactsBook.</title>
        <editorList>
            <person name="Lefranc M.P."/>
            <person name="Lefranc G."/>
        </editorList>
        <authorList>
            <person name="Lefranc M.P."/>
            <person name="Lefranc G."/>
        </authorList>
    </citation>
    <scope>NOMENCLATURE</scope>
</reference>
<reference key="4">
    <citation type="journal article" date="2007" name="Annu. Rev. Genet.">
        <title>Immunoglobulin somatic hypermutation.</title>
        <authorList>
            <person name="Teng G."/>
            <person name="Papavasiliou F.N."/>
        </authorList>
    </citation>
    <scope>REVIEW ON SOMATIC HYPERMUTATION</scope>
</reference>
<reference key="5">
    <citation type="journal article" date="2010" name="J. Allergy Clin. Immunol.">
        <title>Structure and function of immunoglobulins.</title>
        <authorList>
            <person name="Schroeder H.W. Jr."/>
            <person name="Cavacini L."/>
        </authorList>
    </citation>
    <scope>REVIEW ON IMMUNOGLOBULINS</scope>
</reference>
<reference key="6">
    <citation type="journal article" date="2012" name="Nat. Rev. Immunol.">
        <title>Molecular programming of B cell memory.</title>
        <authorList>
            <person name="McHeyzer-Williams M."/>
            <person name="Okitsu S."/>
            <person name="Wang N."/>
            <person name="McHeyzer-Williams L."/>
        </authorList>
    </citation>
    <scope>REVIEW ON FUNCTION</scope>
</reference>
<reference key="7">
    <citation type="journal article" date="2014" name="Front. Immunol.">
        <title>Immunoglobulin and T Cell Receptor Genes: IMGT((R)) and the Birth and Rise of Immunoinformatics.</title>
        <authorList>
            <person name="Lefranc M.P."/>
        </authorList>
    </citation>
    <scope>NOMENCLATURE</scope>
</reference>
<sequence length="118" mass="13156">MKHLWFFLLLVAAPRWVLSQVQLQESGPGLVKPSQTLSLTCTVSGGSISSGDYYWSWIRQPPGKGLEWIGYIYYSGSTYYNPSLKSRVTISVDTSKNQFSLKLSSVTAADTAVYYCAR</sequence>
<evidence type="ECO:0000250" key="1">
    <source>
        <dbReference type="UniProtKB" id="P23083"/>
    </source>
</evidence>
<evidence type="ECO:0000255" key="2"/>
<evidence type="ECO:0000255" key="3">
    <source>
        <dbReference type="PROSITE-ProRule" id="PRU00114"/>
    </source>
</evidence>
<evidence type="ECO:0000303" key="4">
    <source>
    </source>
</evidence>
<evidence type="ECO:0000303" key="5">
    <source>
    </source>
</evidence>
<evidence type="ECO:0000303" key="6">
    <source>
    </source>
</evidence>
<evidence type="ECO:0000303" key="7">
    <source>
    </source>
</evidence>
<evidence type="ECO:0000303" key="8">
    <source>
    </source>
</evidence>
<evidence type="ECO:0000303" key="9">
    <source ref="3"/>
</evidence>
<evidence type="ECO:0000305" key="10"/>
<evidence type="ECO:0000305" key="11">
    <source>
    </source>
</evidence>